<comment type="function">
    <text evidence="1">Catalyzes the interconversion of L-alanine and D-alanine. May also act on other amino acids.</text>
</comment>
<comment type="catalytic activity">
    <reaction evidence="1">
        <text>L-alanine = D-alanine</text>
        <dbReference type="Rhea" id="RHEA:20249"/>
        <dbReference type="ChEBI" id="CHEBI:57416"/>
        <dbReference type="ChEBI" id="CHEBI:57972"/>
        <dbReference type="EC" id="5.1.1.1"/>
    </reaction>
</comment>
<comment type="cofactor">
    <cofactor evidence="1">
        <name>pyridoxal 5'-phosphate</name>
        <dbReference type="ChEBI" id="CHEBI:597326"/>
    </cofactor>
</comment>
<comment type="pathway">
    <text evidence="1">Amino-acid biosynthesis; D-alanine biosynthesis; D-alanine from L-alanine: step 1/1.</text>
</comment>
<comment type="similarity">
    <text evidence="1">Belongs to the alanine racemase family.</text>
</comment>
<keyword id="KW-0413">Isomerase</keyword>
<keyword id="KW-0663">Pyridoxal phosphate</keyword>
<name>ALR2_STAAC</name>
<protein>
    <recommendedName>
        <fullName evidence="1">Alanine racemase 2</fullName>
        <ecNumber evidence="1">5.1.1.1</ecNumber>
    </recommendedName>
</protein>
<accession>Q5HG21</accession>
<evidence type="ECO:0000255" key="1">
    <source>
        <dbReference type="HAMAP-Rule" id="MF_01201"/>
    </source>
</evidence>
<gene>
    <name type="primary">alr2</name>
    <name type="ordered locus">SACOL1434</name>
</gene>
<dbReference type="EC" id="5.1.1.1" evidence="1"/>
<dbReference type="EMBL" id="CP000046">
    <property type="protein sequence ID" value="AAW38179.1"/>
    <property type="molecule type" value="Genomic_DNA"/>
</dbReference>
<dbReference type="RefSeq" id="WP_000127593.1">
    <property type="nucleotide sequence ID" value="NZ_JBGOFO010000003.1"/>
</dbReference>
<dbReference type="SMR" id="Q5HG21"/>
<dbReference type="KEGG" id="sac:SACOL1434"/>
<dbReference type="HOGENOM" id="CLU_028393_2_2_9"/>
<dbReference type="UniPathway" id="UPA00042">
    <property type="reaction ID" value="UER00497"/>
</dbReference>
<dbReference type="Proteomes" id="UP000000530">
    <property type="component" value="Chromosome"/>
</dbReference>
<dbReference type="GO" id="GO:0005829">
    <property type="term" value="C:cytosol"/>
    <property type="evidence" value="ECO:0007669"/>
    <property type="project" value="TreeGrafter"/>
</dbReference>
<dbReference type="GO" id="GO:0008784">
    <property type="term" value="F:alanine racemase activity"/>
    <property type="evidence" value="ECO:0007669"/>
    <property type="project" value="UniProtKB-UniRule"/>
</dbReference>
<dbReference type="GO" id="GO:0030170">
    <property type="term" value="F:pyridoxal phosphate binding"/>
    <property type="evidence" value="ECO:0007669"/>
    <property type="project" value="UniProtKB-UniRule"/>
</dbReference>
<dbReference type="GO" id="GO:0030632">
    <property type="term" value="P:D-alanine biosynthetic process"/>
    <property type="evidence" value="ECO:0007669"/>
    <property type="project" value="UniProtKB-UniRule"/>
</dbReference>
<dbReference type="GO" id="GO:0009252">
    <property type="term" value="P:peptidoglycan biosynthetic process"/>
    <property type="evidence" value="ECO:0007669"/>
    <property type="project" value="TreeGrafter"/>
</dbReference>
<dbReference type="Gene3D" id="3.20.20.10">
    <property type="entry name" value="Alanine racemase"/>
    <property type="match status" value="1"/>
</dbReference>
<dbReference type="Gene3D" id="2.40.37.10">
    <property type="entry name" value="Lyase, Ornithine Decarboxylase, Chain A, domain 1"/>
    <property type="match status" value="1"/>
</dbReference>
<dbReference type="HAMAP" id="MF_01201">
    <property type="entry name" value="Ala_racemase"/>
    <property type="match status" value="1"/>
</dbReference>
<dbReference type="InterPro" id="IPR000821">
    <property type="entry name" value="Ala_racemase"/>
</dbReference>
<dbReference type="InterPro" id="IPR009006">
    <property type="entry name" value="Ala_racemase/Decarboxylase_C"/>
</dbReference>
<dbReference type="InterPro" id="IPR011079">
    <property type="entry name" value="Ala_racemase_C"/>
</dbReference>
<dbReference type="InterPro" id="IPR001608">
    <property type="entry name" value="Ala_racemase_N"/>
</dbReference>
<dbReference type="InterPro" id="IPR029066">
    <property type="entry name" value="PLP-binding_barrel"/>
</dbReference>
<dbReference type="PANTHER" id="PTHR30511">
    <property type="entry name" value="ALANINE RACEMASE"/>
    <property type="match status" value="1"/>
</dbReference>
<dbReference type="PANTHER" id="PTHR30511:SF0">
    <property type="entry name" value="ALANINE RACEMASE, CATABOLIC-RELATED"/>
    <property type="match status" value="1"/>
</dbReference>
<dbReference type="Pfam" id="PF00842">
    <property type="entry name" value="Ala_racemase_C"/>
    <property type="match status" value="1"/>
</dbReference>
<dbReference type="Pfam" id="PF01168">
    <property type="entry name" value="Ala_racemase_N"/>
    <property type="match status" value="1"/>
</dbReference>
<dbReference type="PRINTS" id="PR00992">
    <property type="entry name" value="ALARACEMASE"/>
</dbReference>
<dbReference type="SMART" id="SM01005">
    <property type="entry name" value="Ala_racemase_C"/>
    <property type="match status" value="1"/>
</dbReference>
<dbReference type="SUPFAM" id="SSF50621">
    <property type="entry name" value="Alanine racemase C-terminal domain-like"/>
    <property type="match status" value="1"/>
</dbReference>
<dbReference type="SUPFAM" id="SSF51419">
    <property type="entry name" value="PLP-binding barrel"/>
    <property type="match status" value="1"/>
</dbReference>
<reference key="1">
    <citation type="journal article" date="2005" name="J. Bacteriol.">
        <title>Insights on evolution of virulence and resistance from the complete genome analysis of an early methicillin-resistant Staphylococcus aureus strain and a biofilm-producing methicillin-resistant Staphylococcus epidermidis strain.</title>
        <authorList>
            <person name="Gill S.R."/>
            <person name="Fouts D.E."/>
            <person name="Archer G.L."/>
            <person name="Mongodin E.F."/>
            <person name="DeBoy R.T."/>
            <person name="Ravel J."/>
            <person name="Paulsen I.T."/>
            <person name="Kolonay J.F."/>
            <person name="Brinkac L.M."/>
            <person name="Beanan M.J."/>
            <person name="Dodson R.J."/>
            <person name="Daugherty S.C."/>
            <person name="Madupu R."/>
            <person name="Angiuoli S.V."/>
            <person name="Durkin A.S."/>
            <person name="Haft D.H."/>
            <person name="Vamathevan J.J."/>
            <person name="Khouri H."/>
            <person name="Utterback T.R."/>
            <person name="Lee C."/>
            <person name="Dimitrov G."/>
            <person name="Jiang L."/>
            <person name="Qin H."/>
            <person name="Weidman J."/>
            <person name="Tran K."/>
            <person name="Kang K.H."/>
            <person name="Hance I.R."/>
            <person name="Nelson K.E."/>
            <person name="Fraser C.M."/>
        </authorList>
    </citation>
    <scope>NUCLEOTIDE SEQUENCE [LARGE SCALE GENOMIC DNA]</scope>
    <source>
        <strain>COL</strain>
    </source>
</reference>
<proteinExistence type="inferred from homology"/>
<organism>
    <name type="scientific">Staphylococcus aureus (strain COL)</name>
    <dbReference type="NCBI Taxonomy" id="93062"/>
    <lineage>
        <taxon>Bacteria</taxon>
        <taxon>Bacillati</taxon>
        <taxon>Bacillota</taxon>
        <taxon>Bacilli</taxon>
        <taxon>Bacillales</taxon>
        <taxon>Staphylococcaceae</taxon>
        <taxon>Staphylococcus</taxon>
    </lineage>
</organism>
<sequence>MTATWSVNKKIFLQNAITVKNNQPLMAVVKNNAYHYDLEFAVTQFIHAGIDTFSTTSLREAIQIRQLAPDATIFLMNAVYEFDLVREHQIHMTLPSLTYYYNHKNDLAGIHVHLEFENLLHRSGFKDLNEIKEVLKDHHHNQNAKMIISGLWTHFGYADEFDVSDYNVERSQWMEIVEALLSEGYQFDLIHAQNSASFYREGQILLPHHTHARVGIALYGSRPYSSLNQHDIVQSLTLKAHVIQVREVQAGDYCGYSFAFEVTKNNTKLAVVDIGYGDGILRTRAKHEALINGKRYPIRALMMSHMFVEVDGNVHAQDEVILYNNDIRIDEYTFKGVGANSEQLSAMNHDSLKKEYISNDC</sequence>
<feature type="chain" id="PRO_0000114576" description="Alanine racemase 2">
    <location>
        <begin position="1"/>
        <end position="361"/>
    </location>
</feature>
<feature type="active site" description="Proton acceptor; specific for D-alanine" evidence="1">
    <location>
        <position position="30"/>
    </location>
</feature>
<feature type="active site" description="Proton acceptor; specific for L-alanine" evidence="1">
    <location>
        <position position="256"/>
    </location>
</feature>
<feature type="binding site" evidence="1">
    <location>
        <position position="122"/>
    </location>
    <ligand>
        <name>substrate</name>
    </ligand>
</feature>
<feature type="binding site" evidence="1">
    <location>
        <position position="303"/>
    </location>
    <ligand>
        <name>substrate</name>
    </ligand>
</feature>
<feature type="modified residue" description="N6-(pyridoxal phosphate)lysine" evidence="1">
    <location>
        <position position="30"/>
    </location>
</feature>